<accession>A3PCP0</accession>
<name>URE2_PROM0</name>
<comment type="catalytic activity">
    <reaction evidence="1">
        <text>urea + 2 H2O + H(+) = hydrogencarbonate + 2 NH4(+)</text>
        <dbReference type="Rhea" id="RHEA:20557"/>
        <dbReference type="ChEBI" id="CHEBI:15377"/>
        <dbReference type="ChEBI" id="CHEBI:15378"/>
        <dbReference type="ChEBI" id="CHEBI:16199"/>
        <dbReference type="ChEBI" id="CHEBI:17544"/>
        <dbReference type="ChEBI" id="CHEBI:28938"/>
        <dbReference type="EC" id="3.5.1.5"/>
    </reaction>
</comment>
<comment type="pathway">
    <text evidence="1">Nitrogen metabolism; urea degradation; CO(2) and NH(3) from urea (urease route): step 1/1.</text>
</comment>
<comment type="subunit">
    <text evidence="1">Heterotrimer of UreA (gamma), UreB (beta) and UreC (alpha) subunits. Three heterotrimers associate to form the active enzyme.</text>
</comment>
<comment type="subcellular location">
    <subcellularLocation>
        <location evidence="1">Cytoplasm</location>
    </subcellularLocation>
</comment>
<comment type="similarity">
    <text evidence="1">Belongs to the urease beta subunit family.</text>
</comment>
<sequence length="106" mass="11646">MSNLIPGEIIPEQGEIELNLGKEVKTVKVSNSGDRPVQIGSHYHFFEANKALIFDRELTLGMRLDIPAGTAIRFEPGDTTDVKLVPYKGLRIAYGFNSLVNGSLDT</sequence>
<evidence type="ECO:0000255" key="1">
    <source>
        <dbReference type="HAMAP-Rule" id="MF_01954"/>
    </source>
</evidence>
<protein>
    <recommendedName>
        <fullName evidence="1">Urease subunit beta</fullName>
        <ecNumber evidence="1">3.5.1.5</ecNumber>
    </recommendedName>
    <alternativeName>
        <fullName evidence="1">Urea amidohydrolase subunit beta</fullName>
    </alternativeName>
</protein>
<proteinExistence type="inferred from homology"/>
<gene>
    <name evidence="1" type="primary">ureB</name>
    <name type="ordered locus">P9301_08921</name>
</gene>
<reference key="1">
    <citation type="journal article" date="2007" name="PLoS Genet.">
        <title>Patterns and implications of gene gain and loss in the evolution of Prochlorococcus.</title>
        <authorList>
            <person name="Kettler G.C."/>
            <person name="Martiny A.C."/>
            <person name="Huang K."/>
            <person name="Zucker J."/>
            <person name="Coleman M.L."/>
            <person name="Rodrigue S."/>
            <person name="Chen F."/>
            <person name="Lapidus A."/>
            <person name="Ferriera S."/>
            <person name="Johnson J."/>
            <person name="Steglich C."/>
            <person name="Church G.M."/>
            <person name="Richardson P."/>
            <person name="Chisholm S.W."/>
        </authorList>
    </citation>
    <scope>NUCLEOTIDE SEQUENCE [LARGE SCALE GENOMIC DNA]</scope>
    <source>
        <strain>MIT 9301</strain>
    </source>
</reference>
<keyword id="KW-0963">Cytoplasm</keyword>
<keyword id="KW-0378">Hydrolase</keyword>
<keyword id="KW-1185">Reference proteome</keyword>
<organism>
    <name type="scientific">Prochlorococcus marinus (strain MIT 9301)</name>
    <dbReference type="NCBI Taxonomy" id="167546"/>
    <lineage>
        <taxon>Bacteria</taxon>
        <taxon>Bacillati</taxon>
        <taxon>Cyanobacteriota</taxon>
        <taxon>Cyanophyceae</taxon>
        <taxon>Synechococcales</taxon>
        <taxon>Prochlorococcaceae</taxon>
        <taxon>Prochlorococcus</taxon>
    </lineage>
</organism>
<dbReference type="EC" id="3.5.1.5" evidence="1"/>
<dbReference type="EMBL" id="CP000576">
    <property type="protein sequence ID" value="ABO17515.1"/>
    <property type="molecule type" value="Genomic_DNA"/>
</dbReference>
<dbReference type="RefSeq" id="WP_011862864.1">
    <property type="nucleotide sequence ID" value="NC_009091.1"/>
</dbReference>
<dbReference type="SMR" id="A3PCP0"/>
<dbReference type="STRING" id="167546.P9301_08921"/>
<dbReference type="KEGG" id="pmg:P9301_08921"/>
<dbReference type="eggNOG" id="COG0832">
    <property type="taxonomic scope" value="Bacteria"/>
</dbReference>
<dbReference type="HOGENOM" id="CLU_129707_1_1_3"/>
<dbReference type="OrthoDB" id="9797217at2"/>
<dbReference type="UniPathway" id="UPA00258">
    <property type="reaction ID" value="UER00370"/>
</dbReference>
<dbReference type="Proteomes" id="UP000001430">
    <property type="component" value="Chromosome"/>
</dbReference>
<dbReference type="GO" id="GO:0035550">
    <property type="term" value="C:urease complex"/>
    <property type="evidence" value="ECO:0007669"/>
    <property type="project" value="InterPro"/>
</dbReference>
<dbReference type="GO" id="GO:0009039">
    <property type="term" value="F:urease activity"/>
    <property type="evidence" value="ECO:0007669"/>
    <property type="project" value="UniProtKB-UniRule"/>
</dbReference>
<dbReference type="GO" id="GO:0043419">
    <property type="term" value="P:urea catabolic process"/>
    <property type="evidence" value="ECO:0007669"/>
    <property type="project" value="UniProtKB-UniRule"/>
</dbReference>
<dbReference type="CDD" id="cd00407">
    <property type="entry name" value="Urease_beta"/>
    <property type="match status" value="1"/>
</dbReference>
<dbReference type="FunFam" id="2.10.150.10:FF:000001">
    <property type="entry name" value="Urease subunit beta"/>
    <property type="match status" value="1"/>
</dbReference>
<dbReference type="Gene3D" id="2.10.150.10">
    <property type="entry name" value="Urease, beta subunit"/>
    <property type="match status" value="1"/>
</dbReference>
<dbReference type="HAMAP" id="MF_01954">
    <property type="entry name" value="Urease_beta"/>
    <property type="match status" value="1"/>
</dbReference>
<dbReference type="InterPro" id="IPR002019">
    <property type="entry name" value="Urease_beta-like"/>
</dbReference>
<dbReference type="InterPro" id="IPR036461">
    <property type="entry name" value="Urease_betasu_sf"/>
</dbReference>
<dbReference type="InterPro" id="IPR050069">
    <property type="entry name" value="Urease_subunit"/>
</dbReference>
<dbReference type="NCBIfam" id="NF009682">
    <property type="entry name" value="PRK13203.1"/>
    <property type="match status" value="1"/>
</dbReference>
<dbReference type="NCBIfam" id="TIGR00192">
    <property type="entry name" value="urease_beta"/>
    <property type="match status" value="1"/>
</dbReference>
<dbReference type="PANTHER" id="PTHR33569">
    <property type="entry name" value="UREASE"/>
    <property type="match status" value="1"/>
</dbReference>
<dbReference type="PANTHER" id="PTHR33569:SF1">
    <property type="entry name" value="UREASE"/>
    <property type="match status" value="1"/>
</dbReference>
<dbReference type="Pfam" id="PF00699">
    <property type="entry name" value="Urease_beta"/>
    <property type="match status" value="1"/>
</dbReference>
<dbReference type="SUPFAM" id="SSF51278">
    <property type="entry name" value="Urease, beta-subunit"/>
    <property type="match status" value="1"/>
</dbReference>
<feature type="chain" id="PRO_1000070753" description="Urease subunit beta">
    <location>
        <begin position="1"/>
        <end position="106"/>
    </location>
</feature>